<gene>
    <name evidence="4" type="primary">cghC</name>
    <name type="ORF">CHGG_02370</name>
</gene>
<comment type="function">
    <text evidence="3">Trans-enoyl reductase; part of the gene cluster that mediates the biosynthesis of the tetramic acid Sch210972, a potential anti-HIV fungal natural product that contains a decalin core (PubMed:26360642). The PKS module of cghG together with the enoylreductase cghC catalyze the formation of the polyketide unit which is then conjugated to 4-hydroxyl-4-methyl glutamate (HMG) by the condensation domain of the cghG NRPS module (PubMed:26360642). One unique structural feature of Sch210972 is the tetramic acid motif proposed to be derived from the non-proteinogenic amino acid HMG, by a Dieckmann-type condensation catalyzed by the reductase domain of cghG (PubMed:26360642). The aldolase cghB catalyzes the aldol condensation of 2 molecules of pyruvic acid to yield the intermediate 4-hydroxyl-4-methyl-2-oxoglutarate (HMOG), which can then be stereoselectively transaminated by an unidentified enzyme to form HMG (PubMed:26360642). The Diels-Alderase cghA then uses the Dieckmann product released by cghG as substrate and catalyzes the Diels-Alder cycloaddition to form the decalin ring of Sch210972 (PubMed:26360642). CghA also suppresses the nonenzymatic formation of the alternative stereoisomer (PubMed:26360642).</text>
</comment>
<comment type="catalytic activity">
    <reaction evidence="3">
        <text>(2S,4S)-4-hydroxy-4-methylglutamate + 8 malonyl-CoA + 3 S-adenosyl-L-methionine + ATP + 8 NADPH + 11 H(+) = (2S)-3-[(2S)-3,5-dioxo-4-[(2E,4R,6R,8E,10E,12E)-4,6,12-trimethyltetradeca-2,8,10,12-tetraenoyl]pyrrolidin-2-yl]-2-hydroxy-2-methylpropanoate + AMP + 3 S-adenosyl-L-homocysteine + 8 CO2 + diphosphate + 8 NADP(+) + 8 CoA + 6 H2O</text>
        <dbReference type="Rhea" id="RHEA:67264"/>
        <dbReference type="ChEBI" id="CHEBI:15377"/>
        <dbReference type="ChEBI" id="CHEBI:15378"/>
        <dbReference type="ChEBI" id="CHEBI:16526"/>
        <dbReference type="ChEBI" id="CHEBI:30616"/>
        <dbReference type="ChEBI" id="CHEBI:33019"/>
        <dbReference type="ChEBI" id="CHEBI:57287"/>
        <dbReference type="ChEBI" id="CHEBI:57384"/>
        <dbReference type="ChEBI" id="CHEBI:57783"/>
        <dbReference type="ChEBI" id="CHEBI:57856"/>
        <dbReference type="ChEBI" id="CHEBI:58349"/>
        <dbReference type="ChEBI" id="CHEBI:59789"/>
        <dbReference type="ChEBI" id="CHEBI:167901"/>
        <dbReference type="ChEBI" id="CHEBI:167907"/>
        <dbReference type="ChEBI" id="CHEBI:456215"/>
    </reaction>
    <physiologicalReaction direction="left-to-right" evidence="3">
        <dbReference type="Rhea" id="RHEA:67265"/>
    </physiologicalReaction>
</comment>
<comment type="pathway">
    <text evidence="3">Secondary metabolite biosynthesis.</text>
</comment>
<comment type="subunit">
    <text evidence="1">Monomer.</text>
</comment>
<comment type="similarity">
    <text evidence="5">Belongs to the zinc-containing alcohol dehydrogenase family.</text>
</comment>
<accession>Q2HBN4</accession>
<dbReference type="EC" id="1.-.-.-" evidence="3"/>
<dbReference type="EMBL" id="CH408030">
    <property type="protein sequence ID" value="EAQ90435.1"/>
    <property type="molecule type" value="Genomic_DNA"/>
</dbReference>
<dbReference type="RefSeq" id="XP_001228886.1">
    <property type="nucleotide sequence ID" value="XM_001228885.1"/>
</dbReference>
<dbReference type="SMR" id="Q2HBN4"/>
<dbReference type="GeneID" id="4388355"/>
<dbReference type="VEuPathDB" id="FungiDB:CHGG_02370"/>
<dbReference type="eggNOG" id="KOG1198">
    <property type="taxonomic scope" value="Eukaryota"/>
</dbReference>
<dbReference type="HOGENOM" id="CLU_026673_16_1_1"/>
<dbReference type="InParanoid" id="Q2HBN4"/>
<dbReference type="OMA" id="KGSIDIC"/>
<dbReference type="OrthoDB" id="48317at2759"/>
<dbReference type="Proteomes" id="UP000001056">
    <property type="component" value="Unassembled WGS sequence"/>
</dbReference>
<dbReference type="GO" id="GO:0000166">
    <property type="term" value="F:nucleotide binding"/>
    <property type="evidence" value="ECO:0007669"/>
    <property type="project" value="UniProtKB-KW"/>
</dbReference>
<dbReference type="GO" id="GO:0016651">
    <property type="term" value="F:oxidoreductase activity, acting on NAD(P)H"/>
    <property type="evidence" value="ECO:0007669"/>
    <property type="project" value="InterPro"/>
</dbReference>
<dbReference type="CDD" id="cd08249">
    <property type="entry name" value="enoyl_reductase_like"/>
    <property type="match status" value="1"/>
</dbReference>
<dbReference type="Gene3D" id="3.90.180.10">
    <property type="entry name" value="Medium-chain alcohol dehydrogenases, catalytic domain"/>
    <property type="match status" value="1"/>
</dbReference>
<dbReference type="Gene3D" id="3.40.50.720">
    <property type="entry name" value="NAD(P)-binding Rossmann-like Domain"/>
    <property type="match status" value="1"/>
</dbReference>
<dbReference type="InterPro" id="IPR013149">
    <property type="entry name" value="ADH-like_C"/>
</dbReference>
<dbReference type="InterPro" id="IPR013154">
    <property type="entry name" value="ADH-like_N"/>
</dbReference>
<dbReference type="InterPro" id="IPR011032">
    <property type="entry name" value="GroES-like_sf"/>
</dbReference>
<dbReference type="InterPro" id="IPR036291">
    <property type="entry name" value="NAD(P)-bd_dom_sf"/>
</dbReference>
<dbReference type="InterPro" id="IPR020843">
    <property type="entry name" value="PKS_ER"/>
</dbReference>
<dbReference type="InterPro" id="IPR047122">
    <property type="entry name" value="Trans-enoyl_RdTase-like"/>
</dbReference>
<dbReference type="PANTHER" id="PTHR45348">
    <property type="entry name" value="HYPOTHETICAL OXIDOREDUCTASE (EUROFUNG)"/>
    <property type="match status" value="1"/>
</dbReference>
<dbReference type="PANTHER" id="PTHR45348:SF2">
    <property type="entry name" value="ZINC-TYPE ALCOHOL DEHYDROGENASE-LIKE PROTEIN C2E1P3.01"/>
    <property type="match status" value="1"/>
</dbReference>
<dbReference type="Pfam" id="PF08240">
    <property type="entry name" value="ADH_N"/>
    <property type="match status" value="1"/>
</dbReference>
<dbReference type="Pfam" id="PF00107">
    <property type="entry name" value="ADH_zinc_N"/>
    <property type="match status" value="1"/>
</dbReference>
<dbReference type="SMART" id="SM00829">
    <property type="entry name" value="PKS_ER"/>
    <property type="match status" value="1"/>
</dbReference>
<dbReference type="SUPFAM" id="SSF50129">
    <property type="entry name" value="GroES-like"/>
    <property type="match status" value="1"/>
</dbReference>
<dbReference type="SUPFAM" id="SSF51735">
    <property type="entry name" value="NAD(P)-binding Rossmann-fold domains"/>
    <property type="match status" value="1"/>
</dbReference>
<organism>
    <name type="scientific">Chaetomium globosum (strain ATCC 6205 / CBS 148.51 / DSM 1962 / NBRC 6347 / NRRL 1970)</name>
    <name type="common">Soil fungus</name>
    <dbReference type="NCBI Taxonomy" id="306901"/>
    <lineage>
        <taxon>Eukaryota</taxon>
        <taxon>Fungi</taxon>
        <taxon>Dikarya</taxon>
        <taxon>Ascomycota</taxon>
        <taxon>Pezizomycotina</taxon>
        <taxon>Sordariomycetes</taxon>
        <taxon>Sordariomycetidae</taxon>
        <taxon>Sordariales</taxon>
        <taxon>Chaetomiaceae</taxon>
        <taxon>Chaetomium</taxon>
    </lineage>
</organism>
<protein>
    <recommendedName>
        <fullName evidence="4">Trans-enoyl reductase cghC</fullName>
        <shortName evidence="4">ER cghC</shortName>
        <ecNumber evidence="3">1.-.-.-</ecNumber>
    </recommendedName>
    <alternativeName>
        <fullName evidence="4">Sch210972 biosynthesis cluster protein C</fullName>
    </alternativeName>
</protein>
<sequence>MAISATTQSALVGGSQDDIILSTSAPIPQRLEDDQVAVAVKAIALNPVDTKMLGDFHTPGAVLGCEFSGVITSAGPVATSEWGLREGDRVSGAIMGMNPLRPQIGAFAQHTVAPAHVVLKVREDWDFAQGAGMGNAWYTSGWALFHTMGLPAGPQLEPLHTLVPPPPGNAGKLPSTNKPITVLVSGGSSSTGTTAVQLLKLAGYHVIATCSARNFDLARQYGADEVFDHSSPTCAADIRERTRNALRFALDCITTPETTRLCYAALGRSGGRYVSLDPFSEAVAATRGVVRPDWVLGPELVGEDIAWPEPHGRKGNPKARVFCEAWTRTLQRLVDQGLVKTHPQLVRDTGLKGALGGLDDIRAKKVSGQKLVYLL</sequence>
<proteinExistence type="evidence at protein level"/>
<reference key="1">
    <citation type="journal article" date="2015" name="Genome Announc.">
        <title>Draft genome sequence of the cellulolytic fungus Chaetomium globosum.</title>
        <authorList>
            <person name="Cuomo C.A."/>
            <person name="Untereiner W.A."/>
            <person name="Ma L.-J."/>
            <person name="Grabherr M."/>
            <person name="Birren B.W."/>
        </authorList>
    </citation>
    <scope>NUCLEOTIDE SEQUENCE [LARGE SCALE GENOMIC DNA]</scope>
    <source>
        <strain>ATCC 6205 / CBS 148.51 / DSM 1962 / NBRC 6347 / NRRL 1970</strain>
    </source>
</reference>
<reference key="2">
    <citation type="journal article" date="2015" name="ChemBioChem">
        <title>Involvement of lipocalin-like CghA in decalin-forming stereoselective intramolecular [4+2] cycloaddition.</title>
        <authorList>
            <person name="Sato M."/>
            <person name="Yagishita F."/>
            <person name="Mino T."/>
            <person name="Uchiyama N."/>
            <person name="Patel A."/>
            <person name="Chooi Y.H."/>
            <person name="Goda Y."/>
            <person name="Xu W."/>
            <person name="Noguchi H."/>
            <person name="Yamamoto T."/>
            <person name="Hotta K."/>
            <person name="Houk K.N."/>
            <person name="Tang Y."/>
            <person name="Watanabe K."/>
        </authorList>
    </citation>
    <scope>FUNCTION</scope>
    <scope>CATALYTIC ACTIVITY</scope>
    <scope>PATHWAY</scope>
</reference>
<name>CGHC_CHAGB</name>
<feature type="chain" id="PRO_0000453335" description="Trans-enoyl reductase cghC">
    <location>
        <begin position="1"/>
        <end position="375"/>
    </location>
</feature>
<feature type="binding site" evidence="1">
    <location>
        <begin position="48"/>
        <end position="51"/>
    </location>
    <ligand>
        <name>NADP(+)</name>
        <dbReference type="ChEBI" id="CHEBI:58349"/>
    </ligand>
</feature>
<feature type="binding site" evidence="2">
    <location>
        <begin position="135"/>
        <end position="142"/>
    </location>
    <ligand>
        <name>substrate</name>
    </ligand>
</feature>
<feature type="binding site" evidence="1">
    <location>
        <begin position="188"/>
        <end position="191"/>
    </location>
    <ligand>
        <name>NADP(+)</name>
        <dbReference type="ChEBI" id="CHEBI:58349"/>
    </ligand>
</feature>
<feature type="binding site" evidence="1">
    <location>
        <begin position="211"/>
        <end position="214"/>
    </location>
    <ligand>
        <name>NADP(+)</name>
        <dbReference type="ChEBI" id="CHEBI:58349"/>
    </ligand>
</feature>
<feature type="binding site" evidence="1">
    <location>
        <begin position="276"/>
        <end position="277"/>
    </location>
    <ligand>
        <name>NADP(+)</name>
        <dbReference type="ChEBI" id="CHEBI:58349"/>
    </ligand>
</feature>
<feature type="binding site" evidence="2">
    <location>
        <begin position="297"/>
        <end position="301"/>
    </location>
    <ligand>
        <name>substrate</name>
    </ligand>
</feature>
<feature type="binding site" evidence="1">
    <location>
        <begin position="366"/>
        <end position="367"/>
    </location>
    <ligand>
        <name>NADP(+)</name>
        <dbReference type="ChEBI" id="CHEBI:58349"/>
    </ligand>
</feature>
<evidence type="ECO:0000250" key="1">
    <source>
        <dbReference type="UniProtKB" id="Q9Y7D0"/>
    </source>
</evidence>
<evidence type="ECO:0000255" key="2"/>
<evidence type="ECO:0000269" key="3">
    <source>
    </source>
</evidence>
<evidence type="ECO:0000303" key="4">
    <source>
    </source>
</evidence>
<evidence type="ECO:0000305" key="5"/>
<keyword id="KW-0521">NADP</keyword>
<keyword id="KW-0547">Nucleotide-binding</keyword>
<keyword id="KW-0560">Oxidoreductase</keyword>
<keyword id="KW-1185">Reference proteome</keyword>